<comment type="function">
    <text evidence="1">Hydrolyzes ribosome-free peptidyl-tRNAs (with 1 or more amino acids incorporated), which drop off the ribosome during protein synthesis, or as a result of ribosome stalling.</text>
</comment>
<comment type="function">
    <text evidence="1">Catalyzes the release of premature peptidyl moieties from peptidyl-tRNA molecules trapped in stalled 50S ribosomal subunits, and thus maintains levels of free tRNAs and 50S ribosomes.</text>
</comment>
<comment type="catalytic activity">
    <reaction evidence="1">
        <text>an N-acyl-L-alpha-aminoacyl-tRNA + H2O = an N-acyl-L-amino acid + a tRNA + H(+)</text>
        <dbReference type="Rhea" id="RHEA:54448"/>
        <dbReference type="Rhea" id="RHEA-COMP:10123"/>
        <dbReference type="Rhea" id="RHEA-COMP:13883"/>
        <dbReference type="ChEBI" id="CHEBI:15377"/>
        <dbReference type="ChEBI" id="CHEBI:15378"/>
        <dbReference type="ChEBI" id="CHEBI:59874"/>
        <dbReference type="ChEBI" id="CHEBI:78442"/>
        <dbReference type="ChEBI" id="CHEBI:138191"/>
        <dbReference type="EC" id="3.1.1.29"/>
    </reaction>
</comment>
<comment type="subunit">
    <text evidence="1">Monomer.</text>
</comment>
<comment type="subcellular location">
    <subcellularLocation>
        <location evidence="1">Cytoplasm</location>
    </subcellularLocation>
</comment>
<comment type="similarity">
    <text evidence="1">Belongs to the PTH family.</text>
</comment>
<proteinExistence type="inferred from homology"/>
<accession>Q4JU38</accession>
<reference key="1">
    <citation type="journal article" date="2005" name="J. Bacteriol.">
        <title>Complete genome sequence and analysis of the multiresistant nosocomial pathogen Corynebacterium jeikeium K411, a lipid-requiring bacterium of the human skin flora.</title>
        <authorList>
            <person name="Tauch A."/>
            <person name="Kaiser O."/>
            <person name="Hain T."/>
            <person name="Goesmann A."/>
            <person name="Weisshaar B."/>
            <person name="Albersmeier A."/>
            <person name="Bekel T."/>
            <person name="Bischoff N."/>
            <person name="Brune I."/>
            <person name="Chakraborty T."/>
            <person name="Kalinowski J."/>
            <person name="Meyer F."/>
            <person name="Rupp O."/>
            <person name="Schneiker S."/>
            <person name="Viehoever P."/>
            <person name="Puehler A."/>
        </authorList>
    </citation>
    <scope>NUCLEOTIDE SEQUENCE [LARGE SCALE GENOMIC DNA]</scope>
    <source>
        <strain>K411</strain>
    </source>
</reference>
<organism>
    <name type="scientific">Corynebacterium jeikeium (strain K411)</name>
    <dbReference type="NCBI Taxonomy" id="306537"/>
    <lineage>
        <taxon>Bacteria</taxon>
        <taxon>Bacillati</taxon>
        <taxon>Actinomycetota</taxon>
        <taxon>Actinomycetes</taxon>
        <taxon>Mycobacteriales</taxon>
        <taxon>Corynebacteriaceae</taxon>
        <taxon>Corynebacterium</taxon>
    </lineage>
</organism>
<name>PTH2_CORJK</name>
<keyword id="KW-0963">Cytoplasm</keyword>
<keyword id="KW-0378">Hydrolase</keyword>
<keyword id="KW-1185">Reference proteome</keyword>
<keyword id="KW-0694">RNA-binding</keyword>
<keyword id="KW-0820">tRNA-binding</keyword>
<sequence>MAVSFLQSLFSVFRKKSSPQEPATTTAGGPAKRTKLTVGELQEFAPEWIVIGLGNPGAKYADTRHNIGYWPIDRLVERYEAQWLPVEGQKAHAALITVEETPVLLLRSTTYMNNSGEAVGPLASALSLPAERIIVCHDELDIAAGQVRIKDKGGEGGHNGLRSMTAELGTQHYVRVRMGIGRPPKGTSVIDFVLSPFEEADIDAENGWMENTLRDSVDSVTLIVNNGTDIARNDIHTRKH</sequence>
<gene>
    <name evidence="1" type="primary">pth2</name>
    <name type="ordered locus">jk1496</name>
</gene>
<feature type="chain" id="PRO_0000264026" description="Peptidyl-tRNA hydrolase 2">
    <location>
        <begin position="1"/>
        <end position="240"/>
    </location>
</feature>
<feature type="active site" description="Proton acceptor" evidence="1">
    <location>
        <position position="65"/>
    </location>
</feature>
<feature type="binding site" evidence="1">
    <location>
        <position position="60"/>
    </location>
    <ligand>
        <name>tRNA</name>
        <dbReference type="ChEBI" id="CHEBI:17843"/>
    </ligand>
</feature>
<feature type="binding site" evidence="1">
    <location>
        <position position="111"/>
    </location>
    <ligand>
        <name>tRNA</name>
        <dbReference type="ChEBI" id="CHEBI:17843"/>
    </ligand>
</feature>
<feature type="binding site" evidence="1">
    <location>
        <position position="113"/>
    </location>
    <ligand>
        <name>tRNA</name>
        <dbReference type="ChEBI" id="CHEBI:17843"/>
    </ligand>
</feature>
<feature type="binding site" evidence="1">
    <location>
        <position position="159"/>
    </location>
    <ligand>
        <name>tRNA</name>
        <dbReference type="ChEBI" id="CHEBI:17843"/>
    </ligand>
</feature>
<feature type="site" description="Discriminates between blocked and unblocked aminoacyl-tRNA" evidence="1">
    <location>
        <position position="55"/>
    </location>
</feature>
<feature type="site" description="Stabilizes the basic form of H active site to accept a proton" evidence="1">
    <location>
        <position position="138"/>
    </location>
</feature>
<dbReference type="EC" id="3.1.1.29" evidence="1"/>
<dbReference type="EMBL" id="CR931997">
    <property type="protein sequence ID" value="CAI37669.1"/>
    <property type="molecule type" value="Genomic_DNA"/>
</dbReference>
<dbReference type="RefSeq" id="WP_005293388.1">
    <property type="nucleotide sequence ID" value="NC_007164.1"/>
</dbReference>
<dbReference type="SMR" id="Q4JU38"/>
<dbReference type="STRING" id="306537.jk1496"/>
<dbReference type="GeneID" id="92739081"/>
<dbReference type="KEGG" id="cjk:jk1496"/>
<dbReference type="eggNOG" id="COG0193">
    <property type="taxonomic scope" value="Bacteria"/>
</dbReference>
<dbReference type="HOGENOM" id="CLU_062456_4_0_11"/>
<dbReference type="OrthoDB" id="9800507at2"/>
<dbReference type="Proteomes" id="UP000000545">
    <property type="component" value="Chromosome"/>
</dbReference>
<dbReference type="GO" id="GO:0005737">
    <property type="term" value="C:cytoplasm"/>
    <property type="evidence" value="ECO:0007669"/>
    <property type="project" value="UniProtKB-SubCell"/>
</dbReference>
<dbReference type="GO" id="GO:0004045">
    <property type="term" value="F:peptidyl-tRNA hydrolase activity"/>
    <property type="evidence" value="ECO:0007669"/>
    <property type="project" value="UniProtKB-UniRule"/>
</dbReference>
<dbReference type="GO" id="GO:0000049">
    <property type="term" value="F:tRNA binding"/>
    <property type="evidence" value="ECO:0007669"/>
    <property type="project" value="UniProtKB-UniRule"/>
</dbReference>
<dbReference type="GO" id="GO:0006515">
    <property type="term" value="P:protein quality control for misfolded or incompletely synthesized proteins"/>
    <property type="evidence" value="ECO:0007669"/>
    <property type="project" value="UniProtKB-UniRule"/>
</dbReference>
<dbReference type="GO" id="GO:0072344">
    <property type="term" value="P:rescue of stalled ribosome"/>
    <property type="evidence" value="ECO:0007669"/>
    <property type="project" value="UniProtKB-UniRule"/>
</dbReference>
<dbReference type="CDD" id="cd00462">
    <property type="entry name" value="PTH"/>
    <property type="match status" value="1"/>
</dbReference>
<dbReference type="FunFam" id="3.40.50.1470:FF:000001">
    <property type="entry name" value="Peptidyl-tRNA hydrolase"/>
    <property type="match status" value="1"/>
</dbReference>
<dbReference type="Gene3D" id="3.40.50.1470">
    <property type="entry name" value="Peptidyl-tRNA hydrolase"/>
    <property type="match status" value="1"/>
</dbReference>
<dbReference type="HAMAP" id="MF_00083">
    <property type="entry name" value="Pept_tRNA_hydro_bact"/>
    <property type="match status" value="1"/>
</dbReference>
<dbReference type="InterPro" id="IPR001328">
    <property type="entry name" value="Pept_tRNA_hydro"/>
</dbReference>
<dbReference type="InterPro" id="IPR018171">
    <property type="entry name" value="Pept_tRNA_hydro_CS"/>
</dbReference>
<dbReference type="InterPro" id="IPR036416">
    <property type="entry name" value="Pept_tRNA_hydro_sf"/>
</dbReference>
<dbReference type="NCBIfam" id="TIGR00447">
    <property type="entry name" value="pth"/>
    <property type="match status" value="1"/>
</dbReference>
<dbReference type="PANTHER" id="PTHR17224">
    <property type="entry name" value="PEPTIDYL-TRNA HYDROLASE"/>
    <property type="match status" value="1"/>
</dbReference>
<dbReference type="PANTHER" id="PTHR17224:SF1">
    <property type="entry name" value="PEPTIDYL-TRNA HYDROLASE"/>
    <property type="match status" value="1"/>
</dbReference>
<dbReference type="Pfam" id="PF01195">
    <property type="entry name" value="Pept_tRNA_hydro"/>
    <property type="match status" value="1"/>
</dbReference>
<dbReference type="SUPFAM" id="SSF53178">
    <property type="entry name" value="Peptidyl-tRNA hydrolase-like"/>
    <property type="match status" value="1"/>
</dbReference>
<dbReference type="PROSITE" id="PS01196">
    <property type="entry name" value="PEPT_TRNA_HYDROL_2"/>
    <property type="match status" value="1"/>
</dbReference>
<evidence type="ECO:0000255" key="1">
    <source>
        <dbReference type="HAMAP-Rule" id="MF_00083"/>
    </source>
</evidence>
<protein>
    <recommendedName>
        <fullName evidence="1">Peptidyl-tRNA hydrolase 2</fullName>
        <shortName evidence="1">Pth 2</shortName>
        <ecNumber evidence="1">3.1.1.29</ecNumber>
    </recommendedName>
</protein>